<dbReference type="EMBL" id="CP001217">
    <property type="protein sequence ID" value="ACJ08318.1"/>
    <property type="molecule type" value="Genomic_DNA"/>
</dbReference>
<dbReference type="SMR" id="B6JN40"/>
<dbReference type="KEGG" id="hpp:HPP12_1166"/>
<dbReference type="HOGENOM" id="CLU_062853_0_0_7"/>
<dbReference type="Proteomes" id="UP000008198">
    <property type="component" value="Chromosome"/>
</dbReference>
<dbReference type="GO" id="GO:0022625">
    <property type="term" value="C:cytosolic large ribosomal subunit"/>
    <property type="evidence" value="ECO:0007669"/>
    <property type="project" value="TreeGrafter"/>
</dbReference>
<dbReference type="GO" id="GO:0019843">
    <property type="term" value="F:rRNA binding"/>
    <property type="evidence" value="ECO:0007669"/>
    <property type="project" value="UniProtKB-UniRule"/>
</dbReference>
<dbReference type="GO" id="GO:0003735">
    <property type="term" value="F:structural constituent of ribosome"/>
    <property type="evidence" value="ECO:0007669"/>
    <property type="project" value="InterPro"/>
</dbReference>
<dbReference type="GO" id="GO:0000049">
    <property type="term" value="F:tRNA binding"/>
    <property type="evidence" value="ECO:0007669"/>
    <property type="project" value="UniProtKB-KW"/>
</dbReference>
<dbReference type="GO" id="GO:0006417">
    <property type="term" value="P:regulation of translation"/>
    <property type="evidence" value="ECO:0007669"/>
    <property type="project" value="UniProtKB-KW"/>
</dbReference>
<dbReference type="GO" id="GO:0006412">
    <property type="term" value="P:translation"/>
    <property type="evidence" value="ECO:0007669"/>
    <property type="project" value="UniProtKB-UniRule"/>
</dbReference>
<dbReference type="CDD" id="cd00403">
    <property type="entry name" value="Ribosomal_L1"/>
    <property type="match status" value="1"/>
</dbReference>
<dbReference type="FunFam" id="3.40.50.790:FF:000001">
    <property type="entry name" value="50S ribosomal protein L1"/>
    <property type="match status" value="1"/>
</dbReference>
<dbReference type="Gene3D" id="3.30.190.20">
    <property type="match status" value="1"/>
</dbReference>
<dbReference type="Gene3D" id="3.40.50.790">
    <property type="match status" value="1"/>
</dbReference>
<dbReference type="HAMAP" id="MF_01318_B">
    <property type="entry name" value="Ribosomal_uL1_B"/>
    <property type="match status" value="1"/>
</dbReference>
<dbReference type="InterPro" id="IPR005878">
    <property type="entry name" value="Ribosom_uL1_bac-type"/>
</dbReference>
<dbReference type="InterPro" id="IPR002143">
    <property type="entry name" value="Ribosomal_uL1"/>
</dbReference>
<dbReference type="InterPro" id="IPR023674">
    <property type="entry name" value="Ribosomal_uL1-like"/>
</dbReference>
<dbReference type="InterPro" id="IPR028364">
    <property type="entry name" value="Ribosomal_uL1/biogenesis"/>
</dbReference>
<dbReference type="InterPro" id="IPR016095">
    <property type="entry name" value="Ribosomal_uL1_3-a/b-sand"/>
</dbReference>
<dbReference type="InterPro" id="IPR023673">
    <property type="entry name" value="Ribosomal_uL1_CS"/>
</dbReference>
<dbReference type="NCBIfam" id="TIGR01169">
    <property type="entry name" value="rplA_bact"/>
    <property type="match status" value="1"/>
</dbReference>
<dbReference type="PANTHER" id="PTHR36427">
    <property type="entry name" value="54S RIBOSOMAL PROTEIN L1, MITOCHONDRIAL"/>
    <property type="match status" value="1"/>
</dbReference>
<dbReference type="PANTHER" id="PTHR36427:SF3">
    <property type="entry name" value="LARGE RIBOSOMAL SUBUNIT PROTEIN UL1M"/>
    <property type="match status" value="1"/>
</dbReference>
<dbReference type="Pfam" id="PF00687">
    <property type="entry name" value="Ribosomal_L1"/>
    <property type="match status" value="1"/>
</dbReference>
<dbReference type="PIRSF" id="PIRSF002155">
    <property type="entry name" value="Ribosomal_L1"/>
    <property type="match status" value="1"/>
</dbReference>
<dbReference type="SUPFAM" id="SSF56808">
    <property type="entry name" value="Ribosomal protein L1"/>
    <property type="match status" value="1"/>
</dbReference>
<dbReference type="PROSITE" id="PS01199">
    <property type="entry name" value="RIBOSOMAL_L1"/>
    <property type="match status" value="1"/>
</dbReference>
<evidence type="ECO:0000255" key="1">
    <source>
        <dbReference type="HAMAP-Rule" id="MF_01318"/>
    </source>
</evidence>
<evidence type="ECO:0000305" key="2"/>
<sequence length="234" mass="25266">MAKKVFKRLEKLFSKIQNDKAYGVEQGVEVVKSLASAKFDETVEVALRLGVDPRHADQMVRGAVVLPHGTGKKVRVAVFAKDIKQDEAKNAGADVVGGDDLAEEIKNGRIDFDMVIATPDMMAVVGKVGRILGPKGLMPNPKTGTVTMDIAKAVSNAKSGQVNFRVDKKGNVHAPIGKASFPEEKIKENMLELVKTINRLKPSSAKGKYIRNAALSLTMSPSVSLDAQELMDIK</sequence>
<organism>
    <name type="scientific">Helicobacter pylori (strain P12)</name>
    <dbReference type="NCBI Taxonomy" id="570508"/>
    <lineage>
        <taxon>Bacteria</taxon>
        <taxon>Pseudomonadati</taxon>
        <taxon>Campylobacterota</taxon>
        <taxon>Epsilonproteobacteria</taxon>
        <taxon>Campylobacterales</taxon>
        <taxon>Helicobacteraceae</taxon>
        <taxon>Helicobacter</taxon>
    </lineage>
</organism>
<comment type="function">
    <text evidence="1">Binds directly to 23S rRNA. The L1 stalk is quite mobile in the ribosome, and is involved in E site tRNA release.</text>
</comment>
<comment type="function">
    <text evidence="1">Protein L1 is also a translational repressor protein, it controls the translation of the L11 operon by binding to its mRNA.</text>
</comment>
<comment type="subunit">
    <text evidence="1">Part of the 50S ribosomal subunit.</text>
</comment>
<comment type="similarity">
    <text evidence="1">Belongs to the universal ribosomal protein uL1 family.</text>
</comment>
<accession>B6JN40</accession>
<proteinExistence type="inferred from homology"/>
<protein>
    <recommendedName>
        <fullName evidence="1">Large ribosomal subunit protein uL1</fullName>
    </recommendedName>
    <alternativeName>
        <fullName evidence="2">50S ribosomal protein L1</fullName>
    </alternativeName>
</protein>
<reference key="1">
    <citation type="submission" date="2008-10" db="EMBL/GenBank/DDBJ databases">
        <title>The complete genome sequence of Helicobacter pylori strain P12.</title>
        <authorList>
            <person name="Fischer W."/>
            <person name="Windhager L."/>
            <person name="Karnholz A."/>
            <person name="Zeiller M."/>
            <person name="Zimmer R."/>
            <person name="Haas R."/>
        </authorList>
    </citation>
    <scope>NUCLEOTIDE SEQUENCE [LARGE SCALE GENOMIC DNA]</scope>
    <source>
        <strain>P12</strain>
    </source>
</reference>
<feature type="chain" id="PRO_1000141412" description="Large ribosomal subunit protein uL1">
    <location>
        <begin position="1"/>
        <end position="234"/>
    </location>
</feature>
<keyword id="KW-0678">Repressor</keyword>
<keyword id="KW-0687">Ribonucleoprotein</keyword>
<keyword id="KW-0689">Ribosomal protein</keyword>
<keyword id="KW-0694">RNA-binding</keyword>
<keyword id="KW-0699">rRNA-binding</keyword>
<keyword id="KW-0810">Translation regulation</keyword>
<keyword id="KW-0820">tRNA-binding</keyword>
<name>RL1_HELP2</name>
<gene>
    <name evidence="1" type="primary">rplA</name>
    <name type="ordered locus">HPP12_1166</name>
</gene>